<accession>B1LF48</accession>
<proteinExistence type="inferred from homology"/>
<feature type="chain" id="PRO_1000140037" description="Multifunctional CCA protein">
    <location>
        <begin position="1"/>
        <end position="412"/>
    </location>
</feature>
<feature type="domain" description="HD" evidence="1">
    <location>
        <begin position="228"/>
        <end position="329"/>
    </location>
</feature>
<feature type="binding site" evidence="1">
    <location>
        <position position="8"/>
    </location>
    <ligand>
        <name>ATP</name>
        <dbReference type="ChEBI" id="CHEBI:30616"/>
    </ligand>
</feature>
<feature type="binding site" evidence="1">
    <location>
        <position position="8"/>
    </location>
    <ligand>
        <name>CTP</name>
        <dbReference type="ChEBI" id="CHEBI:37563"/>
    </ligand>
</feature>
<feature type="binding site" evidence="1">
    <location>
        <position position="11"/>
    </location>
    <ligand>
        <name>ATP</name>
        <dbReference type="ChEBI" id="CHEBI:30616"/>
    </ligand>
</feature>
<feature type="binding site" evidence="1">
    <location>
        <position position="11"/>
    </location>
    <ligand>
        <name>CTP</name>
        <dbReference type="ChEBI" id="CHEBI:37563"/>
    </ligand>
</feature>
<feature type="binding site" evidence="1">
    <location>
        <position position="21"/>
    </location>
    <ligand>
        <name>Mg(2+)</name>
        <dbReference type="ChEBI" id="CHEBI:18420"/>
    </ligand>
</feature>
<feature type="binding site" evidence="1">
    <location>
        <position position="23"/>
    </location>
    <ligand>
        <name>Mg(2+)</name>
        <dbReference type="ChEBI" id="CHEBI:18420"/>
    </ligand>
</feature>
<feature type="binding site" evidence="1">
    <location>
        <position position="91"/>
    </location>
    <ligand>
        <name>ATP</name>
        <dbReference type="ChEBI" id="CHEBI:30616"/>
    </ligand>
</feature>
<feature type="binding site" evidence="1">
    <location>
        <position position="91"/>
    </location>
    <ligand>
        <name>CTP</name>
        <dbReference type="ChEBI" id="CHEBI:37563"/>
    </ligand>
</feature>
<feature type="binding site" evidence="1">
    <location>
        <position position="137"/>
    </location>
    <ligand>
        <name>ATP</name>
        <dbReference type="ChEBI" id="CHEBI:30616"/>
    </ligand>
</feature>
<feature type="binding site" evidence="1">
    <location>
        <position position="137"/>
    </location>
    <ligand>
        <name>CTP</name>
        <dbReference type="ChEBI" id="CHEBI:37563"/>
    </ligand>
</feature>
<feature type="binding site" evidence="1">
    <location>
        <position position="140"/>
    </location>
    <ligand>
        <name>ATP</name>
        <dbReference type="ChEBI" id="CHEBI:30616"/>
    </ligand>
</feature>
<feature type="binding site" evidence="1">
    <location>
        <position position="140"/>
    </location>
    <ligand>
        <name>CTP</name>
        <dbReference type="ChEBI" id="CHEBI:37563"/>
    </ligand>
</feature>
<sequence length="412" mass="46481">MKIYLVGGAVRDALLGLPVKDRDWVVVGSTPQEMLDAGYQQVGRDFPVFLHPQTHEEYALARTERKSGSGYTGFTCYAAPDVTLEDDLKRRDLTINALAQDDNGEIIDPYNGLGDLQNRLLRHVSPAFGEDPLRVLRVARFAARYAHLGFRIADETLALMREMTHAGELEHLTPERVWKETESALTTRNPQVFFQVLRDCGALRVLFPEIDALFGVPAPARWHPEIDTGIHTLMTLSMAAMLSPQVDVRFATLCHDLGKGLTPPELWPRHHGHGPAGVKLVEQLCQRLRVPNEIRDLARLVAEFHDLIHTFPMLNPKTIVKLFDSIDAWRKPQRVEQLALTSEADVRGRTGFESADYPQGRWLREAWEVAQSVPTKAVVEAGFKGVEIREELTRRRIAAVASWKEQRCPKPD</sequence>
<name>CCA_ECOSM</name>
<comment type="function">
    <text evidence="1">Catalyzes the addition and repair of the essential 3'-terminal CCA sequence in tRNAs without using a nucleic acid template. Adds these three nucleotides in the order of C, C, and A to the tRNA nucleotide-73, using CTP and ATP as substrates and producing inorganic pyrophosphate. tRNA 3'-terminal CCA addition is required both for tRNA processing and repair. Also involved in tRNA surveillance by mediating tandem CCA addition to generate a CCACCA at the 3' terminus of unstable tRNAs. While stable tRNAs receive only 3'-terminal CCA, unstable tRNAs are marked with CCACCA and rapidly degraded.</text>
</comment>
<comment type="catalytic activity">
    <reaction evidence="1">
        <text>a tRNA precursor + 2 CTP + ATP = a tRNA with a 3' CCA end + 3 diphosphate</text>
        <dbReference type="Rhea" id="RHEA:14433"/>
        <dbReference type="Rhea" id="RHEA-COMP:10465"/>
        <dbReference type="Rhea" id="RHEA-COMP:10468"/>
        <dbReference type="ChEBI" id="CHEBI:30616"/>
        <dbReference type="ChEBI" id="CHEBI:33019"/>
        <dbReference type="ChEBI" id="CHEBI:37563"/>
        <dbReference type="ChEBI" id="CHEBI:74896"/>
        <dbReference type="ChEBI" id="CHEBI:83071"/>
        <dbReference type="EC" id="2.7.7.72"/>
    </reaction>
</comment>
<comment type="catalytic activity">
    <reaction evidence="1">
        <text>a tRNA with a 3' CCA end + 2 CTP + ATP = a tRNA with a 3' CCACCA end + 3 diphosphate</text>
        <dbReference type="Rhea" id="RHEA:76235"/>
        <dbReference type="Rhea" id="RHEA-COMP:10468"/>
        <dbReference type="Rhea" id="RHEA-COMP:18655"/>
        <dbReference type="ChEBI" id="CHEBI:30616"/>
        <dbReference type="ChEBI" id="CHEBI:33019"/>
        <dbReference type="ChEBI" id="CHEBI:37563"/>
        <dbReference type="ChEBI" id="CHEBI:83071"/>
        <dbReference type="ChEBI" id="CHEBI:195187"/>
    </reaction>
    <physiologicalReaction direction="left-to-right" evidence="1">
        <dbReference type="Rhea" id="RHEA:76236"/>
    </physiologicalReaction>
</comment>
<comment type="cofactor">
    <cofactor evidence="1">
        <name>Mg(2+)</name>
        <dbReference type="ChEBI" id="CHEBI:18420"/>
    </cofactor>
    <text evidence="1">Magnesium is required for nucleotidyltransferase activity.</text>
</comment>
<comment type="cofactor">
    <cofactor evidence="1">
        <name>Ni(2+)</name>
        <dbReference type="ChEBI" id="CHEBI:49786"/>
    </cofactor>
    <text evidence="1">Nickel for phosphatase activity.</text>
</comment>
<comment type="subunit">
    <text evidence="1">Monomer. Can also form homodimers and oligomers.</text>
</comment>
<comment type="domain">
    <text evidence="1">Comprises two domains: an N-terminal domain containing the nucleotidyltransferase activity and a C-terminal HD domain associated with both phosphodiesterase and phosphatase activities.</text>
</comment>
<comment type="miscellaneous">
    <text evidence="1">A single active site specifically recognizes both ATP and CTP and is responsible for their addition.</text>
</comment>
<comment type="similarity">
    <text evidence="1">Belongs to the tRNA nucleotidyltransferase/poly(A) polymerase family. Bacterial CCA-adding enzyme type 1 subfamily.</text>
</comment>
<evidence type="ECO:0000255" key="1">
    <source>
        <dbReference type="HAMAP-Rule" id="MF_01261"/>
    </source>
</evidence>
<dbReference type="EC" id="2.7.7.72" evidence="1"/>
<dbReference type="EC" id="3.1.3.-" evidence="1"/>
<dbReference type="EC" id="3.1.4.-" evidence="1"/>
<dbReference type="EMBL" id="CP000970">
    <property type="protein sequence ID" value="ACB16537.1"/>
    <property type="molecule type" value="Genomic_DNA"/>
</dbReference>
<dbReference type="RefSeq" id="WP_000708491.1">
    <property type="nucleotide sequence ID" value="NC_010498.1"/>
</dbReference>
<dbReference type="SMR" id="B1LF48"/>
<dbReference type="KEGG" id="ecm:EcSMS35_3349"/>
<dbReference type="HOGENOM" id="CLU_015961_1_1_6"/>
<dbReference type="Proteomes" id="UP000007011">
    <property type="component" value="Chromosome"/>
</dbReference>
<dbReference type="GO" id="GO:0005524">
    <property type="term" value="F:ATP binding"/>
    <property type="evidence" value="ECO:0007669"/>
    <property type="project" value="UniProtKB-UniRule"/>
</dbReference>
<dbReference type="GO" id="GO:0004810">
    <property type="term" value="F:CCA tRNA nucleotidyltransferase activity"/>
    <property type="evidence" value="ECO:0007669"/>
    <property type="project" value="UniProtKB-UniRule"/>
</dbReference>
<dbReference type="GO" id="GO:0004112">
    <property type="term" value="F:cyclic-nucleotide phosphodiesterase activity"/>
    <property type="evidence" value="ECO:0007669"/>
    <property type="project" value="UniProtKB-UniRule"/>
</dbReference>
<dbReference type="GO" id="GO:0000287">
    <property type="term" value="F:magnesium ion binding"/>
    <property type="evidence" value="ECO:0007669"/>
    <property type="project" value="UniProtKB-UniRule"/>
</dbReference>
<dbReference type="GO" id="GO:0016791">
    <property type="term" value="F:phosphatase activity"/>
    <property type="evidence" value="ECO:0007669"/>
    <property type="project" value="UniProtKB-UniRule"/>
</dbReference>
<dbReference type="GO" id="GO:0000049">
    <property type="term" value="F:tRNA binding"/>
    <property type="evidence" value="ECO:0007669"/>
    <property type="project" value="UniProtKB-UniRule"/>
</dbReference>
<dbReference type="GO" id="GO:0042245">
    <property type="term" value="P:RNA repair"/>
    <property type="evidence" value="ECO:0007669"/>
    <property type="project" value="UniProtKB-KW"/>
</dbReference>
<dbReference type="GO" id="GO:0001680">
    <property type="term" value="P:tRNA 3'-terminal CCA addition"/>
    <property type="evidence" value="ECO:0007669"/>
    <property type="project" value="UniProtKB-UniRule"/>
</dbReference>
<dbReference type="CDD" id="cd00077">
    <property type="entry name" value="HDc"/>
    <property type="match status" value="1"/>
</dbReference>
<dbReference type="CDD" id="cd05398">
    <property type="entry name" value="NT_ClassII-CCAase"/>
    <property type="match status" value="1"/>
</dbReference>
<dbReference type="FunFam" id="1.10.3090.10:FF:000001">
    <property type="entry name" value="Multifunctional CCA protein"/>
    <property type="match status" value="1"/>
</dbReference>
<dbReference type="FunFam" id="3.30.460.10:FF:000016">
    <property type="entry name" value="Multifunctional CCA protein"/>
    <property type="match status" value="1"/>
</dbReference>
<dbReference type="Gene3D" id="3.30.460.10">
    <property type="entry name" value="Beta Polymerase, domain 2"/>
    <property type="match status" value="1"/>
</dbReference>
<dbReference type="Gene3D" id="1.10.3090.10">
    <property type="entry name" value="cca-adding enzyme, domain 2"/>
    <property type="match status" value="1"/>
</dbReference>
<dbReference type="HAMAP" id="MF_01261">
    <property type="entry name" value="CCA_bact_type1"/>
    <property type="match status" value="1"/>
</dbReference>
<dbReference type="HAMAP" id="MF_01262">
    <property type="entry name" value="CCA_bact_type2"/>
    <property type="match status" value="1"/>
</dbReference>
<dbReference type="InterPro" id="IPR012006">
    <property type="entry name" value="CCA_bact"/>
</dbReference>
<dbReference type="InterPro" id="IPR003607">
    <property type="entry name" value="HD/PDEase_dom"/>
</dbReference>
<dbReference type="InterPro" id="IPR006674">
    <property type="entry name" value="HD_domain"/>
</dbReference>
<dbReference type="InterPro" id="IPR043519">
    <property type="entry name" value="NT_sf"/>
</dbReference>
<dbReference type="InterPro" id="IPR002646">
    <property type="entry name" value="PolA_pol_head_dom"/>
</dbReference>
<dbReference type="InterPro" id="IPR032828">
    <property type="entry name" value="PolyA_RNA-bd"/>
</dbReference>
<dbReference type="InterPro" id="IPR050124">
    <property type="entry name" value="tRNA_CCA-adding_enzyme"/>
</dbReference>
<dbReference type="NCBIfam" id="NF008137">
    <property type="entry name" value="PRK10885.1"/>
    <property type="match status" value="1"/>
</dbReference>
<dbReference type="PANTHER" id="PTHR47545">
    <property type="entry name" value="MULTIFUNCTIONAL CCA PROTEIN"/>
    <property type="match status" value="1"/>
</dbReference>
<dbReference type="PANTHER" id="PTHR47545:SF1">
    <property type="entry name" value="MULTIFUNCTIONAL CCA PROTEIN"/>
    <property type="match status" value="1"/>
</dbReference>
<dbReference type="Pfam" id="PF01966">
    <property type="entry name" value="HD"/>
    <property type="match status" value="1"/>
</dbReference>
<dbReference type="Pfam" id="PF01743">
    <property type="entry name" value="PolyA_pol"/>
    <property type="match status" value="1"/>
</dbReference>
<dbReference type="Pfam" id="PF12627">
    <property type="entry name" value="PolyA_pol_RNAbd"/>
    <property type="match status" value="1"/>
</dbReference>
<dbReference type="PIRSF" id="PIRSF000813">
    <property type="entry name" value="CCA_bact"/>
    <property type="match status" value="1"/>
</dbReference>
<dbReference type="SUPFAM" id="SSF81301">
    <property type="entry name" value="Nucleotidyltransferase"/>
    <property type="match status" value="1"/>
</dbReference>
<dbReference type="SUPFAM" id="SSF81891">
    <property type="entry name" value="Poly A polymerase C-terminal region-like"/>
    <property type="match status" value="1"/>
</dbReference>
<dbReference type="PROSITE" id="PS51831">
    <property type="entry name" value="HD"/>
    <property type="match status" value="1"/>
</dbReference>
<keyword id="KW-0067">ATP-binding</keyword>
<keyword id="KW-0378">Hydrolase</keyword>
<keyword id="KW-0460">Magnesium</keyword>
<keyword id="KW-0479">Metal-binding</keyword>
<keyword id="KW-0511">Multifunctional enzyme</keyword>
<keyword id="KW-0533">Nickel</keyword>
<keyword id="KW-0547">Nucleotide-binding</keyword>
<keyword id="KW-0548">Nucleotidyltransferase</keyword>
<keyword id="KW-0692">RNA repair</keyword>
<keyword id="KW-0694">RNA-binding</keyword>
<keyword id="KW-0808">Transferase</keyword>
<keyword id="KW-0819">tRNA processing</keyword>
<organism>
    <name type="scientific">Escherichia coli (strain SMS-3-5 / SECEC)</name>
    <dbReference type="NCBI Taxonomy" id="439855"/>
    <lineage>
        <taxon>Bacteria</taxon>
        <taxon>Pseudomonadati</taxon>
        <taxon>Pseudomonadota</taxon>
        <taxon>Gammaproteobacteria</taxon>
        <taxon>Enterobacterales</taxon>
        <taxon>Enterobacteriaceae</taxon>
        <taxon>Escherichia</taxon>
    </lineage>
</organism>
<protein>
    <recommendedName>
        <fullName evidence="1">Multifunctional CCA protein</fullName>
    </recommendedName>
    <domain>
        <recommendedName>
            <fullName evidence="1">CCA-adding enzyme</fullName>
            <ecNumber evidence="1">2.7.7.72</ecNumber>
        </recommendedName>
        <alternativeName>
            <fullName evidence="1">CCA tRNA nucleotidyltransferase</fullName>
        </alternativeName>
        <alternativeName>
            <fullName evidence="1">tRNA CCA-pyrophosphorylase</fullName>
        </alternativeName>
        <alternativeName>
            <fullName evidence="1">tRNA adenylyl-/cytidylyl-transferase</fullName>
        </alternativeName>
        <alternativeName>
            <fullName evidence="1">tRNA nucleotidyltransferase</fullName>
        </alternativeName>
        <alternativeName>
            <fullName evidence="1">tRNA-NT</fullName>
        </alternativeName>
    </domain>
    <domain>
        <recommendedName>
            <fullName evidence="1">2'-nucleotidase</fullName>
            <ecNumber evidence="1">3.1.3.-</ecNumber>
        </recommendedName>
    </domain>
    <domain>
        <recommendedName>
            <fullName evidence="1">2',3'-cyclic phosphodiesterase</fullName>
            <ecNumber evidence="1">3.1.4.-</ecNumber>
        </recommendedName>
    </domain>
    <domain>
        <recommendedName>
            <fullName evidence="1">Phosphatase</fullName>
            <ecNumber evidence="1">3.1.3.-</ecNumber>
        </recommendedName>
    </domain>
</protein>
<gene>
    <name evidence="1" type="primary">cca</name>
    <name type="ordered locus">EcSMS35_3349</name>
</gene>
<reference key="1">
    <citation type="journal article" date="2008" name="J. Bacteriol.">
        <title>Insights into the environmental resistance gene pool from the genome sequence of the multidrug-resistant environmental isolate Escherichia coli SMS-3-5.</title>
        <authorList>
            <person name="Fricke W.F."/>
            <person name="Wright M.S."/>
            <person name="Lindell A.H."/>
            <person name="Harkins D.M."/>
            <person name="Baker-Austin C."/>
            <person name="Ravel J."/>
            <person name="Stepanauskas R."/>
        </authorList>
    </citation>
    <scope>NUCLEOTIDE SEQUENCE [LARGE SCALE GENOMIC DNA]</scope>
    <source>
        <strain>SMS-3-5 / SECEC</strain>
    </source>
</reference>